<feature type="chain" id="PRO_0000191546" description="Sperm protamine P1">
    <location>
        <begin position="1"/>
        <end position="49"/>
    </location>
</feature>
<organism>
    <name type="scientific">Pteropus hypomelanus</name>
    <name type="common">Island flying fox</name>
    <name type="synonym">Variable flying fox</name>
    <dbReference type="NCBI Taxonomy" id="9405"/>
    <lineage>
        <taxon>Eukaryota</taxon>
        <taxon>Metazoa</taxon>
        <taxon>Chordata</taxon>
        <taxon>Craniata</taxon>
        <taxon>Vertebrata</taxon>
        <taxon>Euteleostomi</taxon>
        <taxon>Mammalia</taxon>
        <taxon>Eutheria</taxon>
        <taxon>Laurasiatheria</taxon>
        <taxon>Chiroptera</taxon>
        <taxon>Yinpterochiroptera</taxon>
        <taxon>Pteropodoidea</taxon>
        <taxon>Pteropodidae</taxon>
        <taxon>Pteropodinae</taxon>
        <taxon>Pteropus</taxon>
    </lineage>
</organism>
<comment type="function">
    <text evidence="1">Protamines substitute for histones in the chromatin of sperm during the haploid phase of spermatogenesis. They compact sperm DNA into a highly condensed, stable and inactive complex (By similarity).</text>
</comment>
<comment type="subcellular location">
    <subcellularLocation>
        <location evidence="1">Nucleus</location>
    </subcellularLocation>
    <subcellularLocation>
        <location evidence="1">Chromosome</location>
    </subcellularLocation>
</comment>
<comment type="tissue specificity">
    <text>Testis.</text>
</comment>
<comment type="similarity">
    <text evidence="2">Belongs to the protamine P1 family.</text>
</comment>
<protein>
    <recommendedName>
        <fullName>Sperm protamine P1</fullName>
    </recommendedName>
</protein>
<accession>Q8WNZ9</accession>
<proteinExistence type="evidence at transcript level"/>
<keyword id="KW-0158">Chromosome</keyword>
<keyword id="KW-0217">Developmental protein</keyword>
<keyword id="KW-0221">Differentiation</keyword>
<keyword id="KW-0226">DNA condensation</keyword>
<keyword id="KW-0238">DNA-binding</keyword>
<keyword id="KW-0544">Nucleosome core</keyword>
<keyword id="KW-0539">Nucleus</keyword>
<keyword id="KW-0744">Spermatogenesis</keyword>
<dbReference type="EMBL" id="AF435928">
    <property type="protein sequence ID" value="AAL35562.1"/>
    <property type="molecule type" value="Genomic_DNA"/>
</dbReference>
<dbReference type="GO" id="GO:0000786">
    <property type="term" value="C:nucleosome"/>
    <property type="evidence" value="ECO:0007669"/>
    <property type="project" value="UniProtKB-KW"/>
</dbReference>
<dbReference type="GO" id="GO:0005634">
    <property type="term" value="C:nucleus"/>
    <property type="evidence" value="ECO:0007669"/>
    <property type="project" value="UniProtKB-SubCell"/>
</dbReference>
<dbReference type="GO" id="GO:0003677">
    <property type="term" value="F:DNA binding"/>
    <property type="evidence" value="ECO:0007669"/>
    <property type="project" value="UniProtKB-KW"/>
</dbReference>
<dbReference type="GO" id="GO:0030261">
    <property type="term" value="P:chromosome condensation"/>
    <property type="evidence" value="ECO:0007669"/>
    <property type="project" value="UniProtKB-KW"/>
</dbReference>
<dbReference type="GO" id="GO:0035092">
    <property type="term" value="P:sperm DNA condensation"/>
    <property type="evidence" value="ECO:0007669"/>
    <property type="project" value="InterPro"/>
</dbReference>
<dbReference type="InterPro" id="IPR000221">
    <property type="entry name" value="Protamine_P1"/>
</dbReference>
<dbReference type="Pfam" id="PF00260">
    <property type="entry name" value="Protamine_P1"/>
    <property type="match status" value="1"/>
</dbReference>
<dbReference type="PROSITE" id="PS00048">
    <property type="entry name" value="PROTAMINE_P1"/>
    <property type="match status" value="1"/>
</dbReference>
<reference key="1">
    <citation type="journal article" date="2002" name="Mol. Phylogenet. Evol.">
        <title>Characterization and phylogenetic utility of the mammalian protamine P1 gene.</title>
        <authorList>
            <person name="Van Den Bussche R.A."/>
            <person name="Hoofer S.R."/>
            <person name="Hansen E.W."/>
        </authorList>
    </citation>
    <scope>NUCLEOTIDE SEQUENCE [GENOMIC DNA]</scope>
</reference>
<name>HSP1_PTEHP</name>
<sequence>MARYRCCRSQSRSRCRRRRRRCRRRRRRCCRRRRRVCCRRYTVRCRRRR</sequence>
<gene>
    <name type="primary">PRM1</name>
</gene>
<evidence type="ECO:0000250" key="1"/>
<evidence type="ECO:0000305" key="2"/>